<keyword id="KW-1185">Reference proteome</keyword>
<keyword id="KW-0687">Ribonucleoprotein</keyword>
<keyword id="KW-0689">Ribosomal protein</keyword>
<feature type="chain" id="PRO_1000195962" description="Large ribosomal subunit protein bL32">
    <location>
        <begin position="1"/>
        <end position="56"/>
    </location>
</feature>
<dbReference type="EMBL" id="AP008955">
    <property type="protein sequence ID" value="BAH44611.1"/>
    <property type="molecule type" value="Genomic_DNA"/>
</dbReference>
<dbReference type="RefSeq" id="WP_005834357.1">
    <property type="nucleotide sequence ID" value="NC_012491.1"/>
</dbReference>
<dbReference type="SMR" id="C0ZFQ2"/>
<dbReference type="STRING" id="358681.BBR47_36340"/>
<dbReference type="GeneID" id="95749711"/>
<dbReference type="KEGG" id="bbe:BBR47_36340"/>
<dbReference type="eggNOG" id="COG0333">
    <property type="taxonomic scope" value="Bacteria"/>
</dbReference>
<dbReference type="HOGENOM" id="CLU_129084_1_3_9"/>
<dbReference type="Proteomes" id="UP000001877">
    <property type="component" value="Chromosome"/>
</dbReference>
<dbReference type="GO" id="GO:0015934">
    <property type="term" value="C:large ribosomal subunit"/>
    <property type="evidence" value="ECO:0007669"/>
    <property type="project" value="InterPro"/>
</dbReference>
<dbReference type="GO" id="GO:0003735">
    <property type="term" value="F:structural constituent of ribosome"/>
    <property type="evidence" value="ECO:0007669"/>
    <property type="project" value="InterPro"/>
</dbReference>
<dbReference type="GO" id="GO:0006412">
    <property type="term" value="P:translation"/>
    <property type="evidence" value="ECO:0007669"/>
    <property type="project" value="UniProtKB-UniRule"/>
</dbReference>
<dbReference type="HAMAP" id="MF_00340">
    <property type="entry name" value="Ribosomal_bL32"/>
    <property type="match status" value="1"/>
</dbReference>
<dbReference type="InterPro" id="IPR002677">
    <property type="entry name" value="Ribosomal_bL32"/>
</dbReference>
<dbReference type="InterPro" id="IPR044957">
    <property type="entry name" value="Ribosomal_bL32_bact"/>
</dbReference>
<dbReference type="InterPro" id="IPR011332">
    <property type="entry name" value="Ribosomal_zn-bd"/>
</dbReference>
<dbReference type="NCBIfam" id="TIGR01031">
    <property type="entry name" value="rpmF_bact"/>
    <property type="match status" value="1"/>
</dbReference>
<dbReference type="PANTHER" id="PTHR35534">
    <property type="entry name" value="50S RIBOSOMAL PROTEIN L32"/>
    <property type="match status" value="1"/>
</dbReference>
<dbReference type="PANTHER" id="PTHR35534:SF1">
    <property type="entry name" value="LARGE RIBOSOMAL SUBUNIT PROTEIN BL32"/>
    <property type="match status" value="1"/>
</dbReference>
<dbReference type="Pfam" id="PF01783">
    <property type="entry name" value="Ribosomal_L32p"/>
    <property type="match status" value="1"/>
</dbReference>
<dbReference type="SUPFAM" id="SSF57829">
    <property type="entry name" value="Zn-binding ribosomal proteins"/>
    <property type="match status" value="1"/>
</dbReference>
<comment type="similarity">
    <text evidence="1">Belongs to the bacterial ribosomal protein bL32 family.</text>
</comment>
<name>RL32_BREBN</name>
<evidence type="ECO:0000255" key="1">
    <source>
        <dbReference type="HAMAP-Rule" id="MF_00340"/>
    </source>
</evidence>
<evidence type="ECO:0000305" key="2"/>
<protein>
    <recommendedName>
        <fullName evidence="1">Large ribosomal subunit protein bL32</fullName>
    </recommendedName>
    <alternativeName>
        <fullName evidence="2">50S ribosomal protein L32</fullName>
    </alternativeName>
</protein>
<sequence>MAVPQRRTSKTRKRMRRTHFKLEIPGMIKCDNCSEYKLAHRVCPSCGHYKGVKVAK</sequence>
<organism>
    <name type="scientific">Brevibacillus brevis (strain 47 / JCM 6285 / NBRC 100599)</name>
    <dbReference type="NCBI Taxonomy" id="358681"/>
    <lineage>
        <taxon>Bacteria</taxon>
        <taxon>Bacillati</taxon>
        <taxon>Bacillota</taxon>
        <taxon>Bacilli</taxon>
        <taxon>Bacillales</taxon>
        <taxon>Paenibacillaceae</taxon>
        <taxon>Brevibacillus</taxon>
    </lineage>
</organism>
<proteinExistence type="inferred from homology"/>
<accession>C0ZFQ2</accession>
<gene>
    <name evidence="1" type="primary">rpmF</name>
    <name type="ordered locus">BBR47_36340</name>
</gene>
<reference key="1">
    <citation type="submission" date="2005-03" db="EMBL/GenBank/DDBJ databases">
        <title>Brevibacillus brevis strain 47, complete genome.</title>
        <authorList>
            <person name="Hosoyama A."/>
            <person name="Yamada R."/>
            <person name="Hongo Y."/>
            <person name="Terui Y."/>
            <person name="Ankai A."/>
            <person name="Masuyama W."/>
            <person name="Sekiguchi M."/>
            <person name="Takeda T."/>
            <person name="Asano K."/>
            <person name="Ohji S."/>
            <person name="Ichikawa N."/>
            <person name="Narita S."/>
            <person name="Aoki N."/>
            <person name="Miura H."/>
            <person name="Matsushita S."/>
            <person name="Sekigawa T."/>
            <person name="Yamagata H."/>
            <person name="Yoshikawa H."/>
            <person name="Udaka S."/>
            <person name="Tanikawa S."/>
            <person name="Fujita N."/>
        </authorList>
    </citation>
    <scope>NUCLEOTIDE SEQUENCE [LARGE SCALE GENOMIC DNA]</scope>
    <source>
        <strain>47 / JCM 6285 / NBRC 100599</strain>
    </source>
</reference>